<organism>
    <name type="scientific">Nitrosomonas eutropha (strain DSM 101675 / C91 / Nm57)</name>
    <dbReference type="NCBI Taxonomy" id="335283"/>
    <lineage>
        <taxon>Bacteria</taxon>
        <taxon>Pseudomonadati</taxon>
        <taxon>Pseudomonadota</taxon>
        <taxon>Betaproteobacteria</taxon>
        <taxon>Nitrosomonadales</taxon>
        <taxon>Nitrosomonadaceae</taxon>
        <taxon>Nitrosomonas</taxon>
    </lineage>
</organism>
<protein>
    <recommendedName>
        <fullName evidence="1">Deoxyuridine 5'-triphosphate nucleotidohydrolase</fullName>
        <shortName evidence="1">dUTPase</shortName>
        <ecNumber evidence="1">3.6.1.23</ecNumber>
    </recommendedName>
    <alternativeName>
        <fullName evidence="1">dUTP pyrophosphatase</fullName>
    </alternativeName>
</protein>
<evidence type="ECO:0000255" key="1">
    <source>
        <dbReference type="HAMAP-Rule" id="MF_00116"/>
    </source>
</evidence>
<reference key="1">
    <citation type="journal article" date="2007" name="Environ. Microbiol.">
        <title>Whole-genome analysis of the ammonia-oxidizing bacterium, Nitrosomonas eutropha C91: implications for niche adaptation.</title>
        <authorList>
            <person name="Stein L.Y."/>
            <person name="Arp D.J."/>
            <person name="Berube P.M."/>
            <person name="Chain P.S."/>
            <person name="Hauser L."/>
            <person name="Jetten M.S."/>
            <person name="Klotz M.G."/>
            <person name="Larimer F.W."/>
            <person name="Norton J.M."/>
            <person name="Op den Camp H.J.M."/>
            <person name="Shin M."/>
            <person name="Wei X."/>
        </authorList>
    </citation>
    <scope>NUCLEOTIDE SEQUENCE [LARGE SCALE GENOMIC DNA]</scope>
    <source>
        <strain>DSM 101675 / C91 / Nm57</strain>
    </source>
</reference>
<sequence length="149" mass="16089">MKQVDIKLFDPRLKDCFPGYATPGSAGLDLRACIDERTEIHPGETLLIPSGIAIHLANPGFAAVVLPRSGLGHKHGIVLGNLVGLIDSDYQGQILVSCWNRGQTTFALEPLERIAQLVIVPVIQASFNVVNDFQHSQRGERGFGSTGKC</sequence>
<accession>Q0AHX8</accession>
<name>DUT_NITEC</name>
<dbReference type="EC" id="3.6.1.23" evidence="1"/>
<dbReference type="EMBL" id="CP000450">
    <property type="protein sequence ID" value="ABI59054.1"/>
    <property type="molecule type" value="Genomic_DNA"/>
</dbReference>
<dbReference type="RefSeq" id="WP_011633879.1">
    <property type="nucleotide sequence ID" value="NC_008344.1"/>
</dbReference>
<dbReference type="SMR" id="Q0AHX8"/>
<dbReference type="STRING" id="335283.Neut_0784"/>
<dbReference type="KEGG" id="net:Neut_0784"/>
<dbReference type="eggNOG" id="COG0756">
    <property type="taxonomic scope" value="Bacteria"/>
</dbReference>
<dbReference type="HOGENOM" id="CLU_068508_1_1_4"/>
<dbReference type="OrthoDB" id="9809956at2"/>
<dbReference type="UniPathway" id="UPA00610">
    <property type="reaction ID" value="UER00666"/>
</dbReference>
<dbReference type="Proteomes" id="UP000001966">
    <property type="component" value="Chromosome"/>
</dbReference>
<dbReference type="GO" id="GO:0004170">
    <property type="term" value="F:dUTP diphosphatase activity"/>
    <property type="evidence" value="ECO:0007669"/>
    <property type="project" value="UniProtKB-UniRule"/>
</dbReference>
<dbReference type="GO" id="GO:0000287">
    <property type="term" value="F:magnesium ion binding"/>
    <property type="evidence" value="ECO:0007669"/>
    <property type="project" value="UniProtKB-UniRule"/>
</dbReference>
<dbReference type="GO" id="GO:0006226">
    <property type="term" value="P:dUMP biosynthetic process"/>
    <property type="evidence" value="ECO:0007669"/>
    <property type="project" value="UniProtKB-UniRule"/>
</dbReference>
<dbReference type="GO" id="GO:0046081">
    <property type="term" value="P:dUTP catabolic process"/>
    <property type="evidence" value="ECO:0007669"/>
    <property type="project" value="InterPro"/>
</dbReference>
<dbReference type="CDD" id="cd07557">
    <property type="entry name" value="trimeric_dUTPase"/>
    <property type="match status" value="1"/>
</dbReference>
<dbReference type="FunFam" id="2.70.40.10:FF:000002">
    <property type="entry name" value="dUTP diphosphatase"/>
    <property type="match status" value="1"/>
</dbReference>
<dbReference type="Gene3D" id="2.70.40.10">
    <property type="match status" value="1"/>
</dbReference>
<dbReference type="HAMAP" id="MF_00116">
    <property type="entry name" value="dUTPase_bact"/>
    <property type="match status" value="1"/>
</dbReference>
<dbReference type="InterPro" id="IPR008181">
    <property type="entry name" value="dUTPase"/>
</dbReference>
<dbReference type="InterPro" id="IPR029054">
    <property type="entry name" value="dUTPase-like"/>
</dbReference>
<dbReference type="InterPro" id="IPR036157">
    <property type="entry name" value="dUTPase-like_sf"/>
</dbReference>
<dbReference type="InterPro" id="IPR033704">
    <property type="entry name" value="dUTPase_trimeric"/>
</dbReference>
<dbReference type="NCBIfam" id="TIGR00576">
    <property type="entry name" value="dut"/>
    <property type="match status" value="1"/>
</dbReference>
<dbReference type="NCBIfam" id="NF001862">
    <property type="entry name" value="PRK00601.1"/>
    <property type="match status" value="1"/>
</dbReference>
<dbReference type="PANTHER" id="PTHR11241">
    <property type="entry name" value="DEOXYURIDINE 5'-TRIPHOSPHATE NUCLEOTIDOHYDROLASE"/>
    <property type="match status" value="1"/>
</dbReference>
<dbReference type="PANTHER" id="PTHR11241:SF0">
    <property type="entry name" value="DEOXYURIDINE 5'-TRIPHOSPHATE NUCLEOTIDOHYDROLASE"/>
    <property type="match status" value="1"/>
</dbReference>
<dbReference type="Pfam" id="PF00692">
    <property type="entry name" value="dUTPase"/>
    <property type="match status" value="1"/>
</dbReference>
<dbReference type="SUPFAM" id="SSF51283">
    <property type="entry name" value="dUTPase-like"/>
    <property type="match status" value="1"/>
</dbReference>
<gene>
    <name evidence="1" type="primary">dut</name>
    <name type="ordered locus">Neut_0784</name>
</gene>
<proteinExistence type="inferred from homology"/>
<comment type="function">
    <text evidence="1">This enzyme is involved in nucleotide metabolism: it produces dUMP, the immediate precursor of thymidine nucleotides and it decreases the intracellular concentration of dUTP so that uracil cannot be incorporated into DNA.</text>
</comment>
<comment type="catalytic activity">
    <reaction evidence="1">
        <text>dUTP + H2O = dUMP + diphosphate + H(+)</text>
        <dbReference type="Rhea" id="RHEA:10248"/>
        <dbReference type="ChEBI" id="CHEBI:15377"/>
        <dbReference type="ChEBI" id="CHEBI:15378"/>
        <dbReference type="ChEBI" id="CHEBI:33019"/>
        <dbReference type="ChEBI" id="CHEBI:61555"/>
        <dbReference type="ChEBI" id="CHEBI:246422"/>
        <dbReference type="EC" id="3.6.1.23"/>
    </reaction>
</comment>
<comment type="cofactor">
    <cofactor evidence="1">
        <name>Mg(2+)</name>
        <dbReference type="ChEBI" id="CHEBI:18420"/>
    </cofactor>
</comment>
<comment type="pathway">
    <text evidence="1">Pyrimidine metabolism; dUMP biosynthesis; dUMP from dCTP (dUTP route): step 2/2.</text>
</comment>
<comment type="similarity">
    <text evidence="1">Belongs to the dUTPase family.</text>
</comment>
<keyword id="KW-0378">Hydrolase</keyword>
<keyword id="KW-0460">Magnesium</keyword>
<keyword id="KW-0479">Metal-binding</keyword>
<keyword id="KW-0546">Nucleotide metabolism</keyword>
<feature type="chain" id="PRO_1000015491" description="Deoxyuridine 5'-triphosphate nucleotidohydrolase">
    <location>
        <begin position="1"/>
        <end position="149"/>
    </location>
</feature>
<feature type="binding site" evidence="1">
    <location>
        <begin position="68"/>
        <end position="70"/>
    </location>
    <ligand>
        <name>substrate</name>
    </ligand>
</feature>
<feature type="binding site" evidence="1">
    <location>
        <position position="81"/>
    </location>
    <ligand>
        <name>substrate</name>
    </ligand>
</feature>
<feature type="binding site" evidence="1">
    <location>
        <begin position="85"/>
        <end position="87"/>
    </location>
    <ligand>
        <name>substrate</name>
    </ligand>
</feature>